<evidence type="ECO:0000255" key="1">
    <source>
        <dbReference type="HAMAP-Rule" id="MF_01416"/>
    </source>
</evidence>
<accession>A4VS65</accession>
<comment type="function">
    <text evidence="1">F(1)F(0) ATP synthase produces ATP from ADP in the presence of a proton or sodium gradient. F-type ATPases consist of two structural domains, F(1) containing the extramembraneous catalytic core and F(0) containing the membrane proton channel, linked together by a central stalk and a peripheral stalk. During catalysis, ATP synthesis in the catalytic domain of F(1) is coupled via a rotary mechanism of the central stalk subunits to proton translocation.</text>
</comment>
<comment type="function">
    <text evidence="1">This protein is part of the stalk that links CF(0) to CF(1). It either transmits conformational changes from CF(0) to CF(1) or is implicated in proton conduction.</text>
</comment>
<comment type="subunit">
    <text evidence="1">F-type ATPases have 2 components, F(1) - the catalytic core - and F(0) - the membrane proton channel. F(1) has five subunits: alpha(3), beta(3), gamma(1), delta(1), epsilon(1). F(0) has three main subunits: a(1), b(2) and c(10-14). The alpha and beta chains form an alternating ring which encloses part of the gamma chain. F(1) is attached to F(0) by a central stalk formed by the gamma and epsilon chains, while a peripheral stalk is formed by the delta and b chains.</text>
</comment>
<comment type="subcellular location">
    <subcellularLocation>
        <location evidence="1">Cell inner membrane</location>
        <topology evidence="1">Peripheral membrane protein</topology>
    </subcellularLocation>
</comment>
<comment type="similarity">
    <text evidence="1">Belongs to the ATPase delta chain family.</text>
</comment>
<protein>
    <recommendedName>
        <fullName evidence="1">ATP synthase subunit delta</fullName>
    </recommendedName>
    <alternativeName>
        <fullName evidence="1">ATP synthase F(1) sector subunit delta</fullName>
    </alternativeName>
    <alternativeName>
        <fullName evidence="1">F-type ATPase subunit delta</fullName>
        <shortName evidence="1">F-ATPase subunit delta</shortName>
    </alternativeName>
</protein>
<feature type="chain" id="PRO_0000371078" description="ATP synthase subunit delta">
    <location>
        <begin position="1"/>
        <end position="178"/>
    </location>
</feature>
<sequence>MINTQTLARPYAKAAFEFASAAGQTDSWSKMLNLAAVAVEVPEVAALLNDPRLTSESKVQALVRVLGDDADEAFRNYVQTLGENDRLSVLPTVWELYEDIKAQAEKTLEAEVETAFELSNAQLQTLAAALSKRLDRTVNLQQVVNPALIGGVLIRAGDVVVDGSVRGKLSQLAESLKS</sequence>
<reference key="1">
    <citation type="journal article" date="2008" name="Proc. Natl. Acad. Sci. U.S.A.">
        <title>Nitrogen fixation island and rhizosphere competence traits in the genome of root-associated Pseudomonas stutzeri A1501.</title>
        <authorList>
            <person name="Yan Y."/>
            <person name="Yang J."/>
            <person name="Dou Y."/>
            <person name="Chen M."/>
            <person name="Ping S."/>
            <person name="Peng J."/>
            <person name="Lu W."/>
            <person name="Zhang W."/>
            <person name="Yao Z."/>
            <person name="Li H."/>
            <person name="Liu W."/>
            <person name="He S."/>
            <person name="Geng L."/>
            <person name="Zhang X."/>
            <person name="Yang F."/>
            <person name="Yu H."/>
            <person name="Zhan Y."/>
            <person name="Li D."/>
            <person name="Lin Z."/>
            <person name="Wang Y."/>
            <person name="Elmerich C."/>
            <person name="Lin M."/>
            <person name="Jin Q."/>
        </authorList>
    </citation>
    <scope>NUCLEOTIDE SEQUENCE [LARGE SCALE GENOMIC DNA]</scope>
    <source>
        <strain>A1501</strain>
    </source>
</reference>
<name>ATPD_STUS1</name>
<dbReference type="EMBL" id="CP000304">
    <property type="protein sequence ID" value="ABP81816.1"/>
    <property type="molecule type" value="Genomic_DNA"/>
</dbReference>
<dbReference type="RefSeq" id="WP_011915194.1">
    <property type="nucleotide sequence ID" value="NC_009434.1"/>
</dbReference>
<dbReference type="SMR" id="A4VS65"/>
<dbReference type="KEGG" id="psa:PST_4194"/>
<dbReference type="eggNOG" id="COG0712">
    <property type="taxonomic scope" value="Bacteria"/>
</dbReference>
<dbReference type="HOGENOM" id="CLU_085114_3_0_6"/>
<dbReference type="Proteomes" id="UP000000233">
    <property type="component" value="Chromosome"/>
</dbReference>
<dbReference type="GO" id="GO:0005886">
    <property type="term" value="C:plasma membrane"/>
    <property type="evidence" value="ECO:0007669"/>
    <property type="project" value="UniProtKB-SubCell"/>
</dbReference>
<dbReference type="GO" id="GO:0045259">
    <property type="term" value="C:proton-transporting ATP synthase complex"/>
    <property type="evidence" value="ECO:0007669"/>
    <property type="project" value="UniProtKB-KW"/>
</dbReference>
<dbReference type="GO" id="GO:0046933">
    <property type="term" value="F:proton-transporting ATP synthase activity, rotational mechanism"/>
    <property type="evidence" value="ECO:0007669"/>
    <property type="project" value="UniProtKB-UniRule"/>
</dbReference>
<dbReference type="Gene3D" id="1.10.520.20">
    <property type="entry name" value="N-terminal domain of the delta subunit of the F1F0-ATP synthase"/>
    <property type="match status" value="1"/>
</dbReference>
<dbReference type="HAMAP" id="MF_01416">
    <property type="entry name" value="ATP_synth_delta_bact"/>
    <property type="match status" value="1"/>
</dbReference>
<dbReference type="InterPro" id="IPR026015">
    <property type="entry name" value="ATP_synth_OSCP/delta_N_sf"/>
</dbReference>
<dbReference type="InterPro" id="IPR020781">
    <property type="entry name" value="ATPase_OSCP/d_CS"/>
</dbReference>
<dbReference type="InterPro" id="IPR000711">
    <property type="entry name" value="ATPase_OSCP/dsu"/>
</dbReference>
<dbReference type="NCBIfam" id="TIGR01145">
    <property type="entry name" value="ATP_synt_delta"/>
    <property type="match status" value="1"/>
</dbReference>
<dbReference type="NCBIfam" id="NF004402">
    <property type="entry name" value="PRK05758.2-2"/>
    <property type="match status" value="1"/>
</dbReference>
<dbReference type="PANTHER" id="PTHR11910">
    <property type="entry name" value="ATP SYNTHASE DELTA CHAIN"/>
    <property type="match status" value="1"/>
</dbReference>
<dbReference type="Pfam" id="PF00213">
    <property type="entry name" value="OSCP"/>
    <property type="match status" value="1"/>
</dbReference>
<dbReference type="PRINTS" id="PR00125">
    <property type="entry name" value="ATPASEDELTA"/>
</dbReference>
<dbReference type="SUPFAM" id="SSF47928">
    <property type="entry name" value="N-terminal domain of the delta subunit of the F1F0-ATP synthase"/>
    <property type="match status" value="1"/>
</dbReference>
<dbReference type="PROSITE" id="PS00389">
    <property type="entry name" value="ATPASE_DELTA"/>
    <property type="match status" value="1"/>
</dbReference>
<keyword id="KW-0066">ATP synthesis</keyword>
<keyword id="KW-0997">Cell inner membrane</keyword>
<keyword id="KW-1003">Cell membrane</keyword>
<keyword id="KW-0139">CF(1)</keyword>
<keyword id="KW-0375">Hydrogen ion transport</keyword>
<keyword id="KW-0406">Ion transport</keyword>
<keyword id="KW-0472">Membrane</keyword>
<keyword id="KW-1185">Reference proteome</keyword>
<keyword id="KW-0813">Transport</keyword>
<proteinExistence type="inferred from homology"/>
<organism>
    <name type="scientific">Stutzerimonas stutzeri (strain A1501)</name>
    <name type="common">Pseudomonas stutzeri</name>
    <dbReference type="NCBI Taxonomy" id="379731"/>
    <lineage>
        <taxon>Bacteria</taxon>
        <taxon>Pseudomonadati</taxon>
        <taxon>Pseudomonadota</taxon>
        <taxon>Gammaproteobacteria</taxon>
        <taxon>Pseudomonadales</taxon>
        <taxon>Pseudomonadaceae</taxon>
        <taxon>Stutzerimonas</taxon>
    </lineage>
</organism>
<gene>
    <name evidence="1" type="primary">atpH</name>
    <name type="ordered locus">PST_4194</name>
</gene>